<reference key="1">
    <citation type="submission" date="2006-09" db="EMBL/GenBank/DDBJ databases">
        <title>Complete sequence of chromosome 1 of Shewanella sp. ANA-3.</title>
        <authorList>
            <person name="Copeland A."/>
            <person name="Lucas S."/>
            <person name="Lapidus A."/>
            <person name="Barry K."/>
            <person name="Detter J.C."/>
            <person name="Glavina del Rio T."/>
            <person name="Hammon N."/>
            <person name="Israni S."/>
            <person name="Dalin E."/>
            <person name="Tice H."/>
            <person name="Pitluck S."/>
            <person name="Chertkov O."/>
            <person name="Brettin T."/>
            <person name="Bruce D."/>
            <person name="Han C."/>
            <person name="Tapia R."/>
            <person name="Gilna P."/>
            <person name="Schmutz J."/>
            <person name="Larimer F."/>
            <person name="Land M."/>
            <person name="Hauser L."/>
            <person name="Kyrpides N."/>
            <person name="Kim E."/>
            <person name="Newman D."/>
            <person name="Salticov C."/>
            <person name="Konstantinidis K."/>
            <person name="Klappenback J."/>
            <person name="Tiedje J."/>
            <person name="Richardson P."/>
        </authorList>
    </citation>
    <scope>NUCLEOTIDE SEQUENCE [LARGE SCALE GENOMIC DNA]</scope>
    <source>
        <strain>ANA-3</strain>
    </source>
</reference>
<name>RNPH_SHESA</name>
<proteinExistence type="inferred from homology"/>
<comment type="function">
    <text evidence="1">Phosphorolytic 3'-5' exoribonuclease that plays an important role in tRNA 3'-end maturation. Removes nucleotide residues following the 3'-CCA terminus of tRNAs; can also add nucleotides to the ends of RNA molecules by using nucleoside diphosphates as substrates, but this may not be physiologically important. Probably plays a role in initiation of 16S rRNA degradation (leading to ribosome degradation) during starvation.</text>
</comment>
<comment type="catalytic activity">
    <reaction evidence="1">
        <text>tRNA(n+1) + phosphate = tRNA(n) + a ribonucleoside 5'-diphosphate</text>
        <dbReference type="Rhea" id="RHEA:10628"/>
        <dbReference type="Rhea" id="RHEA-COMP:17343"/>
        <dbReference type="Rhea" id="RHEA-COMP:17344"/>
        <dbReference type="ChEBI" id="CHEBI:43474"/>
        <dbReference type="ChEBI" id="CHEBI:57930"/>
        <dbReference type="ChEBI" id="CHEBI:173114"/>
        <dbReference type="EC" id="2.7.7.56"/>
    </reaction>
</comment>
<comment type="subunit">
    <text evidence="1">Homohexameric ring arranged as a trimer of dimers.</text>
</comment>
<comment type="similarity">
    <text evidence="1">Belongs to the RNase PH family.</text>
</comment>
<organism>
    <name type="scientific">Shewanella sp. (strain ANA-3)</name>
    <dbReference type="NCBI Taxonomy" id="94122"/>
    <lineage>
        <taxon>Bacteria</taxon>
        <taxon>Pseudomonadati</taxon>
        <taxon>Pseudomonadota</taxon>
        <taxon>Gammaproteobacteria</taxon>
        <taxon>Alteromonadales</taxon>
        <taxon>Shewanellaceae</taxon>
        <taxon>Shewanella</taxon>
    </lineage>
</organism>
<gene>
    <name evidence="1" type="primary">rph</name>
    <name type="ordered locus">Shewana3_3777</name>
</gene>
<sequence length="237" mass="25606">MRPSNRTPAQTRPITITRQFTAHAEGSVLVEFGETKVLCTASFTEGVPRFLKGQGQGWVTAEYGMLPRSTHSRMDREAARGKQSGRTQEIQRLIGRALRACVDMKALGENTIVIDCDVIQADGGTRTASITGACVALVDALNWARGKGIIKSNPLKFLIAAVSVGIYNGEAISDLEYVEDSAAETDMNVVMTETGKIIEIQGTAEGEPFSHEELIELLGLAKNSIREIVDVQKAALN</sequence>
<evidence type="ECO:0000255" key="1">
    <source>
        <dbReference type="HAMAP-Rule" id="MF_00564"/>
    </source>
</evidence>
<feature type="chain" id="PRO_1000024885" description="Ribonuclease PH">
    <location>
        <begin position="1"/>
        <end position="237"/>
    </location>
</feature>
<feature type="binding site" evidence="1">
    <location>
        <position position="86"/>
    </location>
    <ligand>
        <name>phosphate</name>
        <dbReference type="ChEBI" id="CHEBI:43474"/>
        <note>substrate</note>
    </ligand>
</feature>
<feature type="binding site" evidence="1">
    <location>
        <begin position="124"/>
        <end position="126"/>
    </location>
    <ligand>
        <name>phosphate</name>
        <dbReference type="ChEBI" id="CHEBI:43474"/>
        <note>substrate</note>
    </ligand>
</feature>
<protein>
    <recommendedName>
        <fullName evidence="1">Ribonuclease PH</fullName>
        <shortName evidence="1">RNase PH</shortName>
        <ecNumber evidence="1">2.7.7.56</ecNumber>
    </recommendedName>
    <alternativeName>
        <fullName evidence="1">tRNA nucleotidyltransferase</fullName>
    </alternativeName>
</protein>
<accession>A0L1S6</accession>
<dbReference type="EC" id="2.7.7.56" evidence="1"/>
<dbReference type="EMBL" id="CP000469">
    <property type="protein sequence ID" value="ABK49995.1"/>
    <property type="molecule type" value="Genomic_DNA"/>
</dbReference>
<dbReference type="RefSeq" id="WP_011624329.1">
    <property type="nucleotide sequence ID" value="NC_008577.1"/>
</dbReference>
<dbReference type="SMR" id="A0L1S6"/>
<dbReference type="STRING" id="94122.Shewana3_3777"/>
<dbReference type="GeneID" id="94729708"/>
<dbReference type="KEGG" id="shn:Shewana3_3777"/>
<dbReference type="eggNOG" id="COG0689">
    <property type="taxonomic scope" value="Bacteria"/>
</dbReference>
<dbReference type="HOGENOM" id="CLU_050858_0_0_6"/>
<dbReference type="OrthoDB" id="9802265at2"/>
<dbReference type="Proteomes" id="UP000002589">
    <property type="component" value="Chromosome"/>
</dbReference>
<dbReference type="GO" id="GO:0000175">
    <property type="term" value="F:3'-5'-RNA exonuclease activity"/>
    <property type="evidence" value="ECO:0007669"/>
    <property type="project" value="UniProtKB-UniRule"/>
</dbReference>
<dbReference type="GO" id="GO:0000049">
    <property type="term" value="F:tRNA binding"/>
    <property type="evidence" value="ECO:0007669"/>
    <property type="project" value="UniProtKB-UniRule"/>
</dbReference>
<dbReference type="GO" id="GO:0009022">
    <property type="term" value="F:tRNA nucleotidyltransferase activity"/>
    <property type="evidence" value="ECO:0007669"/>
    <property type="project" value="UniProtKB-UniRule"/>
</dbReference>
<dbReference type="GO" id="GO:0016075">
    <property type="term" value="P:rRNA catabolic process"/>
    <property type="evidence" value="ECO:0007669"/>
    <property type="project" value="UniProtKB-UniRule"/>
</dbReference>
<dbReference type="GO" id="GO:0006364">
    <property type="term" value="P:rRNA processing"/>
    <property type="evidence" value="ECO:0007669"/>
    <property type="project" value="UniProtKB-KW"/>
</dbReference>
<dbReference type="GO" id="GO:0008033">
    <property type="term" value="P:tRNA processing"/>
    <property type="evidence" value="ECO:0007669"/>
    <property type="project" value="UniProtKB-UniRule"/>
</dbReference>
<dbReference type="CDD" id="cd11362">
    <property type="entry name" value="RNase_PH_bact"/>
    <property type="match status" value="1"/>
</dbReference>
<dbReference type="FunFam" id="3.30.230.70:FF:000003">
    <property type="entry name" value="Ribonuclease PH"/>
    <property type="match status" value="1"/>
</dbReference>
<dbReference type="Gene3D" id="3.30.230.70">
    <property type="entry name" value="GHMP Kinase, N-terminal domain"/>
    <property type="match status" value="1"/>
</dbReference>
<dbReference type="HAMAP" id="MF_00564">
    <property type="entry name" value="RNase_PH"/>
    <property type="match status" value="1"/>
</dbReference>
<dbReference type="InterPro" id="IPR001247">
    <property type="entry name" value="ExoRNase_PH_dom1"/>
</dbReference>
<dbReference type="InterPro" id="IPR015847">
    <property type="entry name" value="ExoRNase_PH_dom2"/>
</dbReference>
<dbReference type="InterPro" id="IPR036345">
    <property type="entry name" value="ExoRNase_PH_dom2_sf"/>
</dbReference>
<dbReference type="InterPro" id="IPR027408">
    <property type="entry name" value="PNPase/RNase_PH_dom_sf"/>
</dbReference>
<dbReference type="InterPro" id="IPR020568">
    <property type="entry name" value="Ribosomal_Su5_D2-typ_SF"/>
</dbReference>
<dbReference type="InterPro" id="IPR050080">
    <property type="entry name" value="RNase_PH"/>
</dbReference>
<dbReference type="InterPro" id="IPR002381">
    <property type="entry name" value="RNase_PH_bac-type"/>
</dbReference>
<dbReference type="InterPro" id="IPR018336">
    <property type="entry name" value="RNase_PH_CS"/>
</dbReference>
<dbReference type="NCBIfam" id="TIGR01966">
    <property type="entry name" value="RNasePH"/>
    <property type="match status" value="1"/>
</dbReference>
<dbReference type="PANTHER" id="PTHR11953">
    <property type="entry name" value="EXOSOME COMPLEX COMPONENT"/>
    <property type="match status" value="1"/>
</dbReference>
<dbReference type="PANTHER" id="PTHR11953:SF0">
    <property type="entry name" value="EXOSOME COMPLEX COMPONENT RRP41"/>
    <property type="match status" value="1"/>
</dbReference>
<dbReference type="Pfam" id="PF01138">
    <property type="entry name" value="RNase_PH"/>
    <property type="match status" value="1"/>
</dbReference>
<dbReference type="Pfam" id="PF03725">
    <property type="entry name" value="RNase_PH_C"/>
    <property type="match status" value="1"/>
</dbReference>
<dbReference type="SUPFAM" id="SSF55666">
    <property type="entry name" value="Ribonuclease PH domain 2-like"/>
    <property type="match status" value="1"/>
</dbReference>
<dbReference type="SUPFAM" id="SSF54211">
    <property type="entry name" value="Ribosomal protein S5 domain 2-like"/>
    <property type="match status" value="1"/>
</dbReference>
<dbReference type="PROSITE" id="PS01277">
    <property type="entry name" value="RIBONUCLEASE_PH"/>
    <property type="match status" value="1"/>
</dbReference>
<keyword id="KW-0548">Nucleotidyltransferase</keyword>
<keyword id="KW-0694">RNA-binding</keyword>
<keyword id="KW-0698">rRNA processing</keyword>
<keyword id="KW-0808">Transferase</keyword>
<keyword id="KW-0819">tRNA processing</keyword>
<keyword id="KW-0820">tRNA-binding</keyword>